<sequence length="302" mass="32390">MSKRVTVLMGGFSTERAVSLNSGAAAGEALRQAGYAVTLLDVGRDVAAFIAALTQTRPDVVFNALHGRFGEDGAIQGILDIMALPYTHSGRLASAIAMDKPSAKLVFERFAIPVAPHVVADRASVLAETAMARPYVVKPLDQGSSVGVTIVTSETNDLPFSRDDWPYGRQVMVERFIPGRELTVGVMGDKALGVTEIVTDHRFYDYDAKYAQGGSRHIVPAPVAPEVFAQAQELSVLAHQALGCRGVSRADLRFDGETLYMLEVNTQPGMTDTSLVPEQALHAGISFPDLVTWLVETAQCDA</sequence>
<protein>
    <recommendedName>
        <fullName evidence="2">D-alanine--D-alanine ligase</fullName>
        <ecNumber evidence="2">6.3.2.4</ecNumber>
    </recommendedName>
    <alternativeName>
        <fullName evidence="2">D-Ala-D-Ala ligase</fullName>
    </alternativeName>
    <alternativeName>
        <fullName evidence="2">D-alanylalanine synthetase</fullName>
    </alternativeName>
</protein>
<name>DDL_RHORT</name>
<proteinExistence type="inferred from homology"/>
<accession>Q2RVU7</accession>
<feature type="chain" id="PRO_0000341168" description="D-alanine--D-alanine ligase">
    <location>
        <begin position="1"/>
        <end position="302"/>
    </location>
</feature>
<feature type="domain" description="ATP-grasp" evidence="2">
    <location>
        <begin position="104"/>
        <end position="296"/>
    </location>
</feature>
<feature type="binding site" evidence="2">
    <location>
        <begin position="130"/>
        <end position="183"/>
    </location>
    <ligand>
        <name>ATP</name>
        <dbReference type="ChEBI" id="CHEBI:30616"/>
    </ligand>
</feature>
<feature type="binding site" evidence="2">
    <location>
        <position position="251"/>
    </location>
    <ligand>
        <name>Mg(2+)</name>
        <dbReference type="ChEBI" id="CHEBI:18420"/>
        <label>1</label>
    </ligand>
</feature>
<feature type="binding site" evidence="2">
    <location>
        <position position="263"/>
    </location>
    <ligand>
        <name>Mg(2+)</name>
        <dbReference type="ChEBI" id="CHEBI:18420"/>
        <label>1</label>
    </ligand>
</feature>
<feature type="binding site" evidence="2">
    <location>
        <position position="263"/>
    </location>
    <ligand>
        <name>Mg(2+)</name>
        <dbReference type="ChEBI" id="CHEBI:18420"/>
        <label>2</label>
    </ligand>
</feature>
<feature type="binding site" evidence="2">
    <location>
        <position position="265"/>
    </location>
    <ligand>
        <name>Mg(2+)</name>
        <dbReference type="ChEBI" id="CHEBI:18420"/>
        <label>2</label>
    </ligand>
</feature>
<dbReference type="EC" id="6.3.2.4" evidence="2"/>
<dbReference type="EMBL" id="CP000230">
    <property type="protein sequence ID" value="ABC21748.1"/>
    <property type="molecule type" value="Genomic_DNA"/>
</dbReference>
<dbReference type="RefSeq" id="WP_011388702.1">
    <property type="nucleotide sequence ID" value="NC_007643.1"/>
</dbReference>
<dbReference type="RefSeq" id="YP_426035.1">
    <property type="nucleotide sequence ID" value="NC_007643.1"/>
</dbReference>
<dbReference type="SMR" id="Q2RVU7"/>
<dbReference type="STRING" id="269796.Rru_A0947"/>
<dbReference type="EnsemblBacteria" id="ABC21748">
    <property type="protein sequence ID" value="ABC21748"/>
    <property type="gene ID" value="Rru_A0947"/>
</dbReference>
<dbReference type="KEGG" id="rru:Rru_A0947"/>
<dbReference type="PATRIC" id="fig|269796.9.peg.1003"/>
<dbReference type="eggNOG" id="COG1181">
    <property type="taxonomic scope" value="Bacteria"/>
</dbReference>
<dbReference type="HOGENOM" id="CLU_039268_1_1_5"/>
<dbReference type="PhylomeDB" id="Q2RVU7"/>
<dbReference type="UniPathway" id="UPA00219"/>
<dbReference type="Proteomes" id="UP000001929">
    <property type="component" value="Chromosome"/>
</dbReference>
<dbReference type="GO" id="GO:0005737">
    <property type="term" value="C:cytoplasm"/>
    <property type="evidence" value="ECO:0007669"/>
    <property type="project" value="UniProtKB-SubCell"/>
</dbReference>
<dbReference type="GO" id="GO:0005524">
    <property type="term" value="F:ATP binding"/>
    <property type="evidence" value="ECO:0007669"/>
    <property type="project" value="UniProtKB-KW"/>
</dbReference>
<dbReference type="GO" id="GO:0008716">
    <property type="term" value="F:D-alanine-D-alanine ligase activity"/>
    <property type="evidence" value="ECO:0007669"/>
    <property type="project" value="UniProtKB-UniRule"/>
</dbReference>
<dbReference type="GO" id="GO:0046872">
    <property type="term" value="F:metal ion binding"/>
    <property type="evidence" value="ECO:0007669"/>
    <property type="project" value="UniProtKB-KW"/>
</dbReference>
<dbReference type="GO" id="GO:0071555">
    <property type="term" value="P:cell wall organization"/>
    <property type="evidence" value="ECO:0007669"/>
    <property type="project" value="UniProtKB-KW"/>
</dbReference>
<dbReference type="GO" id="GO:0009252">
    <property type="term" value="P:peptidoglycan biosynthetic process"/>
    <property type="evidence" value="ECO:0007669"/>
    <property type="project" value="UniProtKB-UniRule"/>
</dbReference>
<dbReference type="GO" id="GO:0008360">
    <property type="term" value="P:regulation of cell shape"/>
    <property type="evidence" value="ECO:0007669"/>
    <property type="project" value="UniProtKB-KW"/>
</dbReference>
<dbReference type="Gene3D" id="3.40.50.20">
    <property type="match status" value="1"/>
</dbReference>
<dbReference type="Gene3D" id="3.30.1490.20">
    <property type="entry name" value="ATP-grasp fold, A domain"/>
    <property type="match status" value="1"/>
</dbReference>
<dbReference type="Gene3D" id="3.30.470.20">
    <property type="entry name" value="ATP-grasp fold, B domain"/>
    <property type="match status" value="1"/>
</dbReference>
<dbReference type="HAMAP" id="MF_00047">
    <property type="entry name" value="Dala_Dala_lig"/>
    <property type="match status" value="1"/>
</dbReference>
<dbReference type="InterPro" id="IPR011761">
    <property type="entry name" value="ATP-grasp"/>
</dbReference>
<dbReference type="InterPro" id="IPR013815">
    <property type="entry name" value="ATP_grasp_subdomain_1"/>
</dbReference>
<dbReference type="InterPro" id="IPR000291">
    <property type="entry name" value="D-Ala_lig_Van_CS"/>
</dbReference>
<dbReference type="InterPro" id="IPR005905">
    <property type="entry name" value="D_ala_D_ala"/>
</dbReference>
<dbReference type="InterPro" id="IPR011095">
    <property type="entry name" value="Dala_Dala_lig_C"/>
</dbReference>
<dbReference type="InterPro" id="IPR011127">
    <property type="entry name" value="Dala_Dala_lig_N"/>
</dbReference>
<dbReference type="InterPro" id="IPR016185">
    <property type="entry name" value="PreATP-grasp_dom_sf"/>
</dbReference>
<dbReference type="NCBIfam" id="TIGR01205">
    <property type="entry name" value="D_ala_D_alaTIGR"/>
    <property type="match status" value="1"/>
</dbReference>
<dbReference type="NCBIfam" id="NF002378">
    <property type="entry name" value="PRK01372.1"/>
    <property type="match status" value="1"/>
</dbReference>
<dbReference type="PANTHER" id="PTHR23132">
    <property type="entry name" value="D-ALANINE--D-ALANINE LIGASE"/>
    <property type="match status" value="1"/>
</dbReference>
<dbReference type="PANTHER" id="PTHR23132:SF23">
    <property type="entry name" value="D-ALANINE--D-ALANINE LIGASE B"/>
    <property type="match status" value="1"/>
</dbReference>
<dbReference type="Pfam" id="PF07478">
    <property type="entry name" value="Dala_Dala_lig_C"/>
    <property type="match status" value="1"/>
</dbReference>
<dbReference type="Pfam" id="PF01820">
    <property type="entry name" value="Dala_Dala_lig_N"/>
    <property type="match status" value="1"/>
</dbReference>
<dbReference type="PIRSF" id="PIRSF039102">
    <property type="entry name" value="Ddl/VanB"/>
    <property type="match status" value="1"/>
</dbReference>
<dbReference type="SUPFAM" id="SSF56059">
    <property type="entry name" value="Glutathione synthetase ATP-binding domain-like"/>
    <property type="match status" value="1"/>
</dbReference>
<dbReference type="SUPFAM" id="SSF52440">
    <property type="entry name" value="PreATP-grasp domain"/>
    <property type="match status" value="1"/>
</dbReference>
<dbReference type="PROSITE" id="PS50975">
    <property type="entry name" value="ATP_GRASP"/>
    <property type="match status" value="1"/>
</dbReference>
<dbReference type="PROSITE" id="PS00843">
    <property type="entry name" value="DALA_DALA_LIGASE_1"/>
    <property type="match status" value="1"/>
</dbReference>
<comment type="function">
    <text evidence="2">Cell wall formation.</text>
</comment>
<comment type="catalytic activity">
    <reaction evidence="2">
        <text>2 D-alanine + ATP = D-alanyl-D-alanine + ADP + phosphate + H(+)</text>
        <dbReference type="Rhea" id="RHEA:11224"/>
        <dbReference type="ChEBI" id="CHEBI:15378"/>
        <dbReference type="ChEBI" id="CHEBI:30616"/>
        <dbReference type="ChEBI" id="CHEBI:43474"/>
        <dbReference type="ChEBI" id="CHEBI:57416"/>
        <dbReference type="ChEBI" id="CHEBI:57822"/>
        <dbReference type="ChEBI" id="CHEBI:456216"/>
        <dbReference type="EC" id="6.3.2.4"/>
    </reaction>
</comment>
<comment type="cofactor">
    <cofactor evidence="1">
        <name>Mg(2+)</name>
        <dbReference type="ChEBI" id="CHEBI:18420"/>
    </cofactor>
    <cofactor evidence="1">
        <name>Mn(2+)</name>
        <dbReference type="ChEBI" id="CHEBI:29035"/>
    </cofactor>
    <text evidence="1">Binds 2 magnesium or manganese ions per subunit.</text>
</comment>
<comment type="pathway">
    <text evidence="2">Cell wall biogenesis; peptidoglycan biosynthesis.</text>
</comment>
<comment type="subcellular location">
    <subcellularLocation>
        <location evidence="2">Cytoplasm</location>
    </subcellularLocation>
</comment>
<comment type="similarity">
    <text evidence="2">Belongs to the D-alanine--D-alanine ligase family.</text>
</comment>
<gene>
    <name evidence="2" type="primary">ddl</name>
    <name type="ordered locus">Rru_A0947</name>
</gene>
<evidence type="ECO:0000250" key="1"/>
<evidence type="ECO:0000255" key="2">
    <source>
        <dbReference type="HAMAP-Rule" id="MF_00047"/>
    </source>
</evidence>
<organism>
    <name type="scientific">Rhodospirillum rubrum (strain ATCC 11170 / ATH 1.1.1 / DSM 467 / LMG 4362 / NCIMB 8255 / S1)</name>
    <dbReference type="NCBI Taxonomy" id="269796"/>
    <lineage>
        <taxon>Bacteria</taxon>
        <taxon>Pseudomonadati</taxon>
        <taxon>Pseudomonadota</taxon>
        <taxon>Alphaproteobacteria</taxon>
        <taxon>Rhodospirillales</taxon>
        <taxon>Rhodospirillaceae</taxon>
        <taxon>Rhodospirillum</taxon>
    </lineage>
</organism>
<reference key="1">
    <citation type="journal article" date="2011" name="Stand. Genomic Sci.">
        <title>Complete genome sequence of Rhodospirillum rubrum type strain (S1).</title>
        <authorList>
            <person name="Munk A.C."/>
            <person name="Copeland A."/>
            <person name="Lucas S."/>
            <person name="Lapidus A."/>
            <person name="Del Rio T.G."/>
            <person name="Barry K."/>
            <person name="Detter J.C."/>
            <person name="Hammon N."/>
            <person name="Israni S."/>
            <person name="Pitluck S."/>
            <person name="Brettin T."/>
            <person name="Bruce D."/>
            <person name="Han C."/>
            <person name="Tapia R."/>
            <person name="Gilna P."/>
            <person name="Schmutz J."/>
            <person name="Larimer F."/>
            <person name="Land M."/>
            <person name="Kyrpides N.C."/>
            <person name="Mavromatis K."/>
            <person name="Richardson P."/>
            <person name="Rohde M."/>
            <person name="Goeker M."/>
            <person name="Klenk H.P."/>
            <person name="Zhang Y."/>
            <person name="Roberts G.P."/>
            <person name="Reslewic S."/>
            <person name="Schwartz D.C."/>
        </authorList>
    </citation>
    <scope>NUCLEOTIDE SEQUENCE [LARGE SCALE GENOMIC DNA]</scope>
    <source>
        <strain>ATCC 11170 / ATH 1.1.1 / DSM 467 / LMG 4362 / NCIMB 8255 / S1</strain>
    </source>
</reference>
<keyword id="KW-0067">ATP-binding</keyword>
<keyword id="KW-0133">Cell shape</keyword>
<keyword id="KW-0961">Cell wall biogenesis/degradation</keyword>
<keyword id="KW-0963">Cytoplasm</keyword>
<keyword id="KW-0436">Ligase</keyword>
<keyword id="KW-0460">Magnesium</keyword>
<keyword id="KW-0464">Manganese</keyword>
<keyword id="KW-0479">Metal-binding</keyword>
<keyword id="KW-0547">Nucleotide-binding</keyword>
<keyword id="KW-0573">Peptidoglycan synthesis</keyword>
<keyword id="KW-1185">Reference proteome</keyword>